<sequence length="106" mass="12231">MNDSEFHRLADQLWLTIEERLDDWDGDSDIDCEINGGVLTITFENGSKIIINRQEPLHQVWLATKQGGYHFDLKGDEWICDRSGETFWDLLEQAATQQAGETVSFR</sequence>
<protein>
    <recommendedName>
        <fullName evidence="1 13">Iron-sulfur cluster assembly protein CyaY</fullName>
    </recommendedName>
    <alternativeName>
        <fullName evidence="11">Bacterial frataxin ortholog</fullName>
    </alternativeName>
</protein>
<feature type="chain" id="PRO_0000193936" description="Iron-sulfur cluster assembly protein CyaY">
    <location>
        <begin position="1"/>
        <end position="106"/>
    </location>
</feature>
<feature type="mutagenesis site" description="Abolishes iron binding and increases kinetics of Fe-S formation on IscU; when associated with K-19 and K-22." evidence="3 7">
    <original>E</original>
    <variation>K</variation>
    <location>
        <position position="18"/>
    </location>
</feature>
<feature type="mutagenesis site" description="Abolishes iron binding and increases kinetics of Fe-S formation on IscU; when associated with K-18 and K-22." evidence="3 7">
    <original>E</original>
    <variation>K</variation>
    <location>
        <position position="19"/>
    </location>
</feature>
<feature type="mutagenesis site" description="Abolishes iron binding and increases kinetics of Fe-S formation on IscU; when associated with K-18 and K-19." evidence="3 7">
    <original>D</original>
    <variation>K</variation>
    <location>
        <position position="22"/>
    </location>
</feature>
<feature type="mutagenesis site" description="Increases kinetics of Fe-S formation on IscU." evidence="7">
    <original>D</original>
    <variation>K</variation>
    <location>
        <position position="31"/>
    </location>
</feature>
<feature type="mutagenesis site" description="Increases kinetics of Fe-S formation on IscU." evidence="7">
    <original>W</original>
    <variation>R</variation>
    <location>
        <position position="61"/>
    </location>
</feature>
<feature type="helix" evidence="18">
    <location>
        <begin position="3"/>
        <end position="22"/>
    </location>
</feature>
<feature type="strand" evidence="18">
    <location>
        <begin position="26"/>
        <end position="28"/>
    </location>
</feature>
<feature type="strand" evidence="18">
    <location>
        <begin position="31"/>
        <end position="35"/>
    </location>
</feature>
<feature type="strand" evidence="18">
    <location>
        <begin position="38"/>
        <end position="42"/>
    </location>
</feature>
<feature type="strand" evidence="18">
    <location>
        <begin position="48"/>
        <end position="54"/>
    </location>
</feature>
<feature type="turn" evidence="18">
    <location>
        <begin position="55"/>
        <end position="58"/>
    </location>
</feature>
<feature type="strand" evidence="18">
    <location>
        <begin position="59"/>
        <end position="63"/>
    </location>
</feature>
<feature type="strand" evidence="18">
    <location>
        <begin position="68"/>
        <end position="74"/>
    </location>
</feature>
<feature type="strand" evidence="18">
    <location>
        <begin position="77"/>
        <end position="80"/>
    </location>
</feature>
<feature type="turn" evidence="18">
    <location>
        <begin position="81"/>
        <end position="83"/>
    </location>
</feature>
<feature type="helix" evidence="18">
    <location>
        <begin position="87"/>
        <end position="99"/>
    </location>
</feature>
<comment type="function">
    <text evidence="3 4 5 6 7 8 9">Involved in iron-sulfur (Fe-S) cluster assembly (PubMed:16603772, PubMed:19305405, PubMed:21799759, PubMed:25430730). May act as a regulator of Fe-S biogenesis (PubMed:19305405, PubMed:21799759, PubMed:25430730). Can bind both Fe(2+) and Fe(3+) ions (PubMed:15530368, PubMed:16603772, PubMed:17244611, PubMed:17651435). In vivo, has a positive effect on Fe-S cluster biogenesis under iron-rich growth conditions (PubMed:25430730). In vitro, can inhibit IscS cysteine desulfurase activity and the formation of Fe-S clusters on IscU (PubMed:19305405, PubMed:21799759). In vitro, in the presence of IscS and cysteine, Fe(3+)-CyaY can be used as an iron donor during Fe-S cluster assembly on the scaffold protein IscU (PubMed:16603772).</text>
</comment>
<comment type="activity regulation">
    <text evidence="5">Binds iron under oxidative stress conditions, but not under conditions emulating the intracellular redox potential.</text>
</comment>
<comment type="subunit">
    <text evidence="4 7 9 10">Monomer (PubMed:16603772, PubMed:19305405, PubMed:28931050). Forms homodimers and higher oligomers in the presence of iron (PubMed:16603772, PubMed:28931050). Interacts with IscS (PubMed:16603772, PubMed:19305405, PubMed:25430730).</text>
</comment>
<comment type="interaction">
    <interactant intactId="EBI-9146621">
        <id>P27838</id>
    </interactant>
    <interactant intactId="EBI-550055">
        <id>P0A6B7</id>
        <label>iscS</label>
    </interactant>
    <organismsDiffer>false</organismsDiffer>
    <experiments>2</experiments>
</comment>
<comment type="disruption phenotype">
    <text evidence="2">Cells are not affected in cellular iron content and sensitivity to oxidants.</text>
</comment>
<comment type="similarity">
    <text evidence="1 13">Belongs to the frataxin family.</text>
</comment>
<proteinExistence type="evidence at protein level"/>
<organism>
    <name type="scientific">Escherichia coli (strain K12)</name>
    <dbReference type="NCBI Taxonomy" id="83333"/>
    <lineage>
        <taxon>Bacteria</taxon>
        <taxon>Pseudomonadati</taxon>
        <taxon>Pseudomonadota</taxon>
        <taxon>Gammaproteobacteria</taxon>
        <taxon>Enterobacterales</taxon>
        <taxon>Enterobacteriaceae</taxon>
        <taxon>Escherichia</taxon>
    </lineage>
</organism>
<evidence type="ECO:0000255" key="1">
    <source>
        <dbReference type="HAMAP-Rule" id="MF_00142"/>
    </source>
</evidence>
<evidence type="ECO:0000269" key="2">
    <source>
    </source>
</evidence>
<evidence type="ECO:0000269" key="3">
    <source>
    </source>
</evidence>
<evidence type="ECO:0000269" key="4">
    <source>
    </source>
</evidence>
<evidence type="ECO:0000269" key="5">
    <source>
    </source>
</evidence>
<evidence type="ECO:0000269" key="6">
    <source>
    </source>
</evidence>
<evidence type="ECO:0000269" key="7">
    <source>
    </source>
</evidence>
<evidence type="ECO:0000269" key="8">
    <source>
    </source>
</evidence>
<evidence type="ECO:0000269" key="9">
    <source>
    </source>
</evidence>
<evidence type="ECO:0000269" key="10">
    <source>
    </source>
</evidence>
<evidence type="ECO:0000303" key="11">
    <source>
    </source>
</evidence>
<evidence type="ECO:0000303" key="12">
    <source>
    </source>
</evidence>
<evidence type="ECO:0000305" key="13"/>
<evidence type="ECO:0007744" key="14">
    <source>
        <dbReference type="PDB" id="1EW4"/>
    </source>
</evidence>
<evidence type="ECO:0007744" key="15">
    <source>
        <dbReference type="PDB" id="1SOY"/>
    </source>
</evidence>
<evidence type="ECO:0007744" key="16">
    <source>
        <dbReference type="PDB" id="2EFF"/>
    </source>
</evidence>
<evidence type="ECO:0007744" key="17">
    <source>
        <dbReference type="PDB" id="2P1X"/>
    </source>
</evidence>
<evidence type="ECO:0007829" key="18">
    <source>
        <dbReference type="PDB" id="8IWI"/>
    </source>
</evidence>
<keyword id="KW-0002">3D-structure</keyword>
<keyword id="KW-0408">Iron</keyword>
<keyword id="KW-0479">Metal-binding</keyword>
<keyword id="KW-1185">Reference proteome</keyword>
<reference key="1">
    <citation type="journal article" date="1984" name="Nucleic Acids Res.">
        <title>The complete nucleotide sequence of the adenylate cyclase gene of Escherichia coli.</title>
        <authorList>
            <person name="Aiba H."/>
            <person name="Mori K."/>
            <person name="Tanaka M."/>
            <person name="Ooi T."/>
            <person name="Roy A."/>
            <person name="Danchin A."/>
        </authorList>
    </citation>
    <scope>NUCLEOTIDE SEQUENCE [GENOMIC DNA]</scope>
</reference>
<reference key="2">
    <citation type="journal article" date="1996" name="Biochimie">
        <title>Comparative analysis of the cya locus in enterobacteria and related Gram-negative facultative anaerobes.</title>
        <authorList>
            <person name="Trotot P."/>
            <person name="Sismeiro O."/>
            <person name="Vivares C."/>
            <person name="Glaser P."/>
            <person name="Bresson-Roy A."/>
            <person name="Danchin A."/>
        </authorList>
    </citation>
    <scope>NUCLEOTIDE SEQUENCE [GENOMIC DNA]</scope>
    <source>
        <strain>K12</strain>
    </source>
</reference>
<reference key="3">
    <citation type="journal article" date="1992" name="Science">
        <title>Analysis of the Escherichia coli genome: DNA sequence of the region from 84.5 to 86.5 minutes.</title>
        <authorList>
            <person name="Daniels D.L."/>
            <person name="Plunkett G. III"/>
            <person name="Burland V.D."/>
            <person name="Blattner F.R."/>
        </authorList>
    </citation>
    <scope>NUCLEOTIDE SEQUENCE [LARGE SCALE GENOMIC DNA]</scope>
    <source>
        <strain>K12 / MG1655 / ATCC 47076</strain>
    </source>
</reference>
<reference key="4">
    <citation type="journal article" date="1997" name="Science">
        <title>The complete genome sequence of Escherichia coli K-12.</title>
        <authorList>
            <person name="Blattner F.R."/>
            <person name="Plunkett G. III"/>
            <person name="Bloch C.A."/>
            <person name="Perna N.T."/>
            <person name="Burland V."/>
            <person name="Riley M."/>
            <person name="Collado-Vides J."/>
            <person name="Glasner J.D."/>
            <person name="Rode C.K."/>
            <person name="Mayhew G.F."/>
            <person name="Gregor J."/>
            <person name="Davis N.W."/>
            <person name="Kirkpatrick H.A."/>
            <person name="Goeden M.A."/>
            <person name="Rose D.J."/>
            <person name="Mau B."/>
            <person name="Shao Y."/>
        </authorList>
    </citation>
    <scope>NUCLEOTIDE SEQUENCE [LARGE SCALE GENOMIC DNA]</scope>
    <source>
        <strain>K12 / MG1655 / ATCC 47076</strain>
    </source>
</reference>
<reference key="5">
    <citation type="journal article" date="2006" name="Mol. Syst. Biol.">
        <title>Highly accurate genome sequences of Escherichia coli K-12 strains MG1655 and W3110.</title>
        <authorList>
            <person name="Hayashi K."/>
            <person name="Morooka N."/>
            <person name="Yamamoto Y."/>
            <person name="Fujita K."/>
            <person name="Isono K."/>
            <person name="Choi S."/>
            <person name="Ohtsubo E."/>
            <person name="Baba T."/>
            <person name="Wanner B.L."/>
            <person name="Mori H."/>
            <person name="Horiuchi T."/>
        </authorList>
    </citation>
    <scope>NUCLEOTIDE SEQUENCE [LARGE SCALE GENOMIC DNA]</scope>
    <source>
        <strain>K12 / W3110 / ATCC 27325 / DSM 5911</strain>
    </source>
</reference>
<reference key="6">
    <citation type="journal article" date="1993" name="Adv. Second Messenger Phosphoprotein Res.">
        <title>Phylogeny of adenylyl cyclases.</title>
        <authorList>
            <person name="Danchin A."/>
        </authorList>
    </citation>
    <scope>IDENTIFICATION</scope>
</reference>
<reference key="7">
    <citation type="journal article" date="1999" name="FEBS Lett.">
        <title>Knock-out of the cyaY gene in Escherichia coli does not affect cellular iron content and sensitivity to oxidants.</title>
        <authorList>
            <person name="Li D.S."/>
            <person name="Ohshima K."/>
            <person name="Jiralerspong S."/>
            <person name="Bojanowski M.W."/>
            <person name="Pandolfo M."/>
        </authorList>
    </citation>
    <scope>DISRUPTION PHENOTYPE</scope>
</reference>
<reference key="8">
    <citation type="journal article" date="2006" name="J. Biol. Chem.">
        <title>Iron-sulfur cluster biosynthesis: characterization of Escherichia coli CyaY as an iron donor for the assembly of [2Fe-2S] clusters in the scaffold IscU.</title>
        <authorList>
            <person name="Layer G."/>
            <person name="Ollagnier-de Choudens S."/>
            <person name="Sanakis Y."/>
            <person name="Fontecave M."/>
        </authorList>
    </citation>
    <scope>FUNCTION</scope>
    <scope>IRON-BINDING</scope>
    <scope>SUBUNIT</scope>
    <scope>INTERACTION WITH ISCS</scope>
</reference>
<reference key="9">
    <citation type="journal article" date="2007" name="J. Biol. Chem.">
        <title>Distinct iron binding property of two putative iron donors for the iron-sulfur cluster assembly: IscA and the bacterial frataxin ortholog CyaY under physiological and oxidative stress conditions.</title>
        <authorList>
            <person name="Ding H."/>
            <person name="Yang J."/>
            <person name="Coleman L.C."/>
            <person name="Yeung S."/>
        </authorList>
    </citation>
    <scope>IRON-BINDING</scope>
    <scope>ACTIVITY REGULATION</scope>
</reference>
<reference key="10">
    <citation type="journal article" date="2009" name="Nat. Struct. Mol. Biol.">
        <title>Bacterial frataxin CyaY is the gatekeeper of iron-sulfur cluster formation catalyzed by IscS.</title>
        <authorList>
            <person name="Adinolfi S."/>
            <person name="Iannuzzi C."/>
            <person name="Prischi F."/>
            <person name="Pastore C."/>
            <person name="Iametti S."/>
            <person name="Martin S.R."/>
            <person name="Bonomi F."/>
            <person name="Pastore A."/>
        </authorList>
    </citation>
    <scope>FUNCTION</scope>
    <scope>INTERACTION WITH ISCS</scope>
    <scope>MUTAGENESIS OF GLU-18; GLU-19; ASP-22; ASP-31 AND TRP-61</scope>
</reference>
<reference key="11">
    <citation type="journal article" date="2011" name="PLoS ONE">
        <title>The role of CyaY in iron sulfur cluster assembly on the E. coli IscU scaffold protein.</title>
        <authorList>
            <person name="Iannuzzi C."/>
            <person name="Adinolfi S."/>
            <person name="Howes B.D."/>
            <person name="Garcia-Serres R."/>
            <person name="Clemancey M."/>
            <person name="Latour J.M."/>
            <person name="Smulevich G."/>
            <person name="Pastore A."/>
        </authorList>
    </citation>
    <scope>FUNCTION</scope>
</reference>
<reference key="12">
    <citation type="journal article" date="2015" name="Mol. Microbiol.">
        <title>The iron-binding CyaY and IscX proteins assist the ISC-catalyzed Fe-S biogenesis in Escherichia coli.</title>
        <authorList>
            <person name="Roche B."/>
            <person name="Huguenot A."/>
            <person name="Barras F."/>
            <person name="Py B."/>
        </authorList>
    </citation>
    <scope>FUNCTION</scope>
    <scope>INTERACTION WITH ISCS</scope>
</reference>
<reference key="13">
    <citation type="journal article" date="2017" name="PLoS ONE">
        <title>SAXS and stability studies of iron-induced oligomers of bacterial frataxin CyaY.</title>
        <authorList>
            <person name="Fekry M."/>
            <person name="Alshokry W."/>
            <person name="Grela P."/>
            <person name="Tchorzewski M."/>
            <person name="Ahlgren E.C."/>
            <person name="Soederberg C.A."/>
            <person name="Gakh O."/>
            <person name="Isaya G."/>
            <person name="Al-Karadaghi S."/>
        </authorList>
    </citation>
    <scope>SUBUNIT</scope>
</reference>
<reference evidence="14" key="14">
    <citation type="journal article" date="2000" name="Proc. Natl. Acad. Sci. U.S.A.">
        <title>Crystal structure of Escherichia coli CyaY protein reveals a previously unidentified fold for the evolutionarily conserved frataxin family.</title>
        <authorList>
            <person name="Cho S.J."/>
            <person name="Lee M.G."/>
            <person name="Yang J.K."/>
            <person name="Lee J.Y."/>
            <person name="Song H.K."/>
            <person name="Suh S.W."/>
        </authorList>
    </citation>
    <scope>X-RAY CRYSTALLOGRAPHY (1.40 ANGSTROMS)</scope>
</reference>
<reference evidence="15" key="15">
    <citation type="journal article" date="2004" name="Structure">
        <title>Solution structure of the bacterial frataxin ortholog, CyaY: mapping the iron binding sites.</title>
        <authorList>
            <person name="Nair M."/>
            <person name="Adinolfi S."/>
            <person name="Pastore C."/>
            <person name="Kelly G."/>
            <person name="Temussi P."/>
            <person name="Pastore A."/>
        </authorList>
    </citation>
    <scope>STRUCTURE BY NMR</scope>
    <scope>IRON-BINDING</scope>
    <scope>MUTAGENESIS OF GLU-18; GLU-19 AND ASP-22</scope>
</reference>
<reference evidence="16 17" key="16">
    <citation type="journal article" date="2007" name="FEBS J.">
        <title>Understanding the binding properties of an unusual metal-binding protein--a study of bacterial frataxin.</title>
        <authorList>
            <person name="Pastore C."/>
            <person name="Franzese M."/>
            <person name="Sica F."/>
            <person name="Temussi P."/>
            <person name="Pastore A."/>
        </authorList>
    </citation>
    <scope>X-RAY CRYSTALLOGRAPHY (1.42 ANGSTROMS)</scope>
    <scope>METAL-BINDING</scope>
</reference>
<accession>P27838</accession>
<accession>Q2M8B2</accession>
<name>CYAY_ECOLI</name>
<gene>
    <name evidence="1 12" type="primary">cyaY</name>
    <name type="ordered locus">b3807</name>
    <name type="ordered locus">JW3779</name>
</gene>
<dbReference type="EMBL" id="X66782">
    <property type="protein sequence ID" value="CAA47281.1"/>
    <property type="molecule type" value="Genomic_DNA"/>
</dbReference>
<dbReference type="EMBL" id="M87049">
    <property type="protein sequence ID" value="AAA67603.1"/>
    <property type="molecule type" value="Genomic_DNA"/>
</dbReference>
<dbReference type="EMBL" id="U00096">
    <property type="protein sequence ID" value="AAC76810.1"/>
    <property type="molecule type" value="Genomic_DNA"/>
</dbReference>
<dbReference type="EMBL" id="AP009048">
    <property type="protein sequence ID" value="BAE77494.1"/>
    <property type="molecule type" value="Genomic_DNA"/>
</dbReference>
<dbReference type="PIR" id="S30697">
    <property type="entry name" value="S30697"/>
</dbReference>
<dbReference type="RefSeq" id="NP_418251.1">
    <property type="nucleotide sequence ID" value="NC_000913.3"/>
</dbReference>
<dbReference type="RefSeq" id="WP_000999947.1">
    <property type="nucleotide sequence ID" value="NZ_STEB01000021.1"/>
</dbReference>
<dbReference type="PDB" id="1EW4">
    <property type="method" value="X-ray"/>
    <property type="resolution" value="1.40 A"/>
    <property type="chains" value="A=1-106"/>
</dbReference>
<dbReference type="PDB" id="1SOY">
    <property type="method" value="NMR"/>
    <property type="chains" value="A=1-106"/>
</dbReference>
<dbReference type="PDB" id="2EFF">
    <property type="method" value="X-ray"/>
    <property type="resolution" value="1.80 A"/>
    <property type="chains" value="A=1-106"/>
</dbReference>
<dbReference type="PDB" id="2P1X">
    <property type="method" value="X-ray"/>
    <property type="resolution" value="1.42 A"/>
    <property type="chains" value="A=1-106"/>
</dbReference>
<dbReference type="PDB" id="8HZ1">
    <property type="method" value="X-ray"/>
    <property type="resolution" value="2.00 A"/>
    <property type="chains" value="A=1-106"/>
</dbReference>
<dbReference type="PDB" id="8IVK">
    <property type="method" value="X-ray"/>
    <property type="resolution" value="1.50 A"/>
    <property type="chains" value="A=1-106"/>
</dbReference>
<dbReference type="PDB" id="8IWI">
    <property type="method" value="X-ray"/>
    <property type="resolution" value="1.30 A"/>
    <property type="chains" value="A=1-106"/>
</dbReference>
<dbReference type="PDBsum" id="1EW4"/>
<dbReference type="PDBsum" id="1SOY"/>
<dbReference type="PDBsum" id="2EFF"/>
<dbReference type="PDBsum" id="2P1X"/>
<dbReference type="PDBsum" id="8HZ1"/>
<dbReference type="PDBsum" id="8IVK"/>
<dbReference type="PDBsum" id="8IWI"/>
<dbReference type="SASBDB" id="P27838"/>
<dbReference type="SMR" id="P27838"/>
<dbReference type="BioGRID" id="4260671">
    <property type="interactions" value="116"/>
</dbReference>
<dbReference type="BioGRID" id="852066">
    <property type="interactions" value="2"/>
</dbReference>
<dbReference type="DIP" id="DIP-9356N"/>
<dbReference type="FunCoup" id="P27838">
    <property type="interactions" value="343"/>
</dbReference>
<dbReference type="IntAct" id="P27838">
    <property type="interactions" value="3"/>
</dbReference>
<dbReference type="STRING" id="511145.b3807"/>
<dbReference type="TCDB" id="9.B.21.2.1">
    <property type="family name" value="the frataxin (frataxin) family"/>
</dbReference>
<dbReference type="jPOST" id="P27838"/>
<dbReference type="PaxDb" id="511145-b3807"/>
<dbReference type="EnsemblBacteria" id="AAC76810">
    <property type="protein sequence ID" value="AAC76810"/>
    <property type="gene ID" value="b3807"/>
</dbReference>
<dbReference type="GeneID" id="93778137"/>
<dbReference type="GeneID" id="947754"/>
<dbReference type="KEGG" id="ecj:JW3779"/>
<dbReference type="KEGG" id="eco:b3807"/>
<dbReference type="KEGG" id="ecoc:C3026_20610"/>
<dbReference type="PATRIC" id="fig|1411691.4.peg.2901"/>
<dbReference type="EchoBASE" id="EB1606"/>
<dbReference type="eggNOG" id="COG1965">
    <property type="taxonomic scope" value="Bacteria"/>
</dbReference>
<dbReference type="HOGENOM" id="CLU_080880_3_0_6"/>
<dbReference type="InParanoid" id="P27838"/>
<dbReference type="OMA" id="EPMHEIW"/>
<dbReference type="OrthoDB" id="285675at2"/>
<dbReference type="PhylomeDB" id="P27838"/>
<dbReference type="BioCyc" id="EcoCyc:EG11653-MONOMER"/>
<dbReference type="BioCyc" id="MetaCyc:EG11653-MONOMER"/>
<dbReference type="EvolutionaryTrace" id="P27838"/>
<dbReference type="PRO" id="PR:P27838"/>
<dbReference type="Proteomes" id="UP000000625">
    <property type="component" value="Chromosome"/>
</dbReference>
<dbReference type="GO" id="GO:0005737">
    <property type="term" value="C:cytoplasm"/>
    <property type="evidence" value="ECO:0000314"/>
    <property type="project" value="EcoliWiki"/>
</dbReference>
<dbReference type="GO" id="GO:0005829">
    <property type="term" value="C:cytosol"/>
    <property type="evidence" value="ECO:0000314"/>
    <property type="project" value="EcoCyc"/>
</dbReference>
<dbReference type="GO" id="GO:0008199">
    <property type="term" value="F:ferric iron binding"/>
    <property type="evidence" value="ECO:0000314"/>
    <property type="project" value="EcoCyc"/>
</dbReference>
<dbReference type="GO" id="GO:0008198">
    <property type="term" value="F:ferrous iron binding"/>
    <property type="evidence" value="ECO:0000314"/>
    <property type="project" value="EcoCyc"/>
</dbReference>
<dbReference type="GO" id="GO:0016226">
    <property type="term" value="P:iron-sulfur cluster assembly"/>
    <property type="evidence" value="ECO:0000314"/>
    <property type="project" value="EcoliWiki"/>
</dbReference>
<dbReference type="CDD" id="cd00503">
    <property type="entry name" value="Frataxin"/>
    <property type="match status" value="1"/>
</dbReference>
<dbReference type="FunFam" id="3.30.920.10:FF:000001">
    <property type="entry name" value="Iron-sulfur cluster assembly protein CyaY"/>
    <property type="match status" value="1"/>
</dbReference>
<dbReference type="Gene3D" id="3.30.920.10">
    <property type="entry name" value="Frataxin/CyaY"/>
    <property type="match status" value="1"/>
</dbReference>
<dbReference type="HAMAP" id="MF_00142">
    <property type="entry name" value="CyaY"/>
    <property type="match status" value="1"/>
</dbReference>
<dbReference type="InterPro" id="IPR047584">
    <property type="entry name" value="CyaY"/>
</dbReference>
<dbReference type="InterPro" id="IPR002908">
    <property type="entry name" value="Frataxin/CyaY"/>
</dbReference>
<dbReference type="InterPro" id="IPR036524">
    <property type="entry name" value="Frataxin/CyaY_sf"/>
</dbReference>
<dbReference type="InterPro" id="IPR020895">
    <property type="entry name" value="Frataxin_CS"/>
</dbReference>
<dbReference type="NCBIfam" id="TIGR03421">
    <property type="entry name" value="FeS_CyaY"/>
    <property type="match status" value="1"/>
</dbReference>
<dbReference type="PANTHER" id="PTHR16821">
    <property type="entry name" value="FRATAXIN"/>
    <property type="match status" value="1"/>
</dbReference>
<dbReference type="PANTHER" id="PTHR16821:SF2">
    <property type="entry name" value="FRATAXIN, MITOCHONDRIAL"/>
    <property type="match status" value="1"/>
</dbReference>
<dbReference type="Pfam" id="PF01491">
    <property type="entry name" value="Frataxin_Cyay"/>
    <property type="match status" value="1"/>
</dbReference>
<dbReference type="SMART" id="SM01219">
    <property type="entry name" value="Frataxin_Cyay"/>
    <property type="match status" value="1"/>
</dbReference>
<dbReference type="SUPFAM" id="SSF55387">
    <property type="entry name" value="Frataxin/Nqo15-like"/>
    <property type="match status" value="1"/>
</dbReference>
<dbReference type="PROSITE" id="PS01344">
    <property type="entry name" value="FRATAXIN_1"/>
    <property type="match status" value="1"/>
</dbReference>
<dbReference type="PROSITE" id="PS50810">
    <property type="entry name" value="FRATAXIN_2"/>
    <property type="match status" value="1"/>
</dbReference>